<reference key="1">
    <citation type="submission" date="1995-12" db="EMBL/GenBank/DDBJ databases">
        <title>Nucleotide sequence of the coding region for 180K protein of tobacco mosaic virus common strain OM.</title>
        <authorList>
            <person name="Watanabe T."/>
            <person name="Hibi T."/>
            <person name="Ishihama A."/>
        </authorList>
    </citation>
    <scope>NUCLEOTIDE SEQUENCE [GENOMIC RNA]</scope>
</reference>
<keyword id="KW-0067">ATP-binding</keyword>
<keyword id="KW-0347">Helicase</keyword>
<keyword id="KW-0945">Host-virus interaction</keyword>
<keyword id="KW-0378">Hydrolase</keyword>
<keyword id="KW-1090">Inhibition of host innate immune response by virus</keyword>
<keyword id="KW-0547">Nucleotide-binding</keyword>
<keyword id="KW-0548">Nucleotidyltransferase</keyword>
<keyword id="KW-1185">Reference proteome</keyword>
<keyword id="KW-1159">RNA suppression of termination</keyword>
<keyword id="KW-0696">RNA-directed RNA polymerase</keyword>
<keyword id="KW-0941">Suppressor of RNA silencing</keyword>
<keyword id="KW-0808">Transferase</keyword>
<keyword id="KW-0899">Viral immunoevasion</keyword>
<keyword id="KW-0693">Viral RNA replication</keyword>
<organismHost>
    <name type="scientific">Nicotiana tabacum</name>
    <name type="common">Common tobacco</name>
    <dbReference type="NCBI Taxonomy" id="4097"/>
</organismHost>
<name>RDRP_TMVOM</name>
<proteinExistence type="inferred from homology"/>
<organism>
    <name type="scientific">Tobacco mosaic virus (strain OM)</name>
    <name type="common">TMV</name>
    <dbReference type="NCBI Taxonomy" id="12251"/>
    <lineage>
        <taxon>Viruses</taxon>
        <taxon>Riboviria</taxon>
        <taxon>Orthornavirae</taxon>
        <taxon>Kitrinoviricota</taxon>
        <taxon>Alsuviricetes</taxon>
        <taxon>Martellivirales</taxon>
        <taxon>Virgaviridae</taxon>
        <taxon>Tobamovirus</taxon>
        <taxon>Tobacco mosaic virus</taxon>
    </lineage>
</organism>
<comment type="function">
    <molecule>Replicase large subunit</molecule>
    <text evidence="1">Is an RNA-dependent RNA polymerase active in viral RNA replication.</text>
</comment>
<comment type="function">
    <molecule>Replicase small subunit</molecule>
    <text evidence="1 5">Is a methyltransferase active in RNA capping and an RNA helicase. Methyltransferase displays a cytoplasmic capping enzyme activity. This function is necessary since all viral RNAs are synthesized in the cytoplasm, and host capping enzymes are restricted to the nucleus. Helicase region probably exhibits NTPase and RNA unwinding activities (Potential). It also acts as a suppressor of RNA-mediated gene silencing, also known as post-transcriptional gene silencing (PTGS), a mechanism of plant viral defense that limits the accumulation of viral RNAs. May mediate silencing suppression through either inhibition of HEN1-mediated siRNA or siRNA demethylation (By similarity).</text>
</comment>
<comment type="catalytic activity">
    <reaction evidence="3">
        <text>RNA(n) + a ribonucleoside 5'-triphosphate = RNA(n+1) + diphosphate</text>
        <dbReference type="Rhea" id="RHEA:21248"/>
        <dbReference type="Rhea" id="RHEA-COMP:14527"/>
        <dbReference type="Rhea" id="RHEA-COMP:17342"/>
        <dbReference type="ChEBI" id="CHEBI:33019"/>
        <dbReference type="ChEBI" id="CHEBI:61557"/>
        <dbReference type="ChEBI" id="CHEBI:140395"/>
        <dbReference type="EC" id="2.7.7.48"/>
    </reaction>
</comment>
<comment type="catalytic activity">
    <reaction>
        <text>ATP + H2O = ADP + phosphate + H(+)</text>
        <dbReference type="Rhea" id="RHEA:13065"/>
        <dbReference type="ChEBI" id="CHEBI:15377"/>
        <dbReference type="ChEBI" id="CHEBI:15378"/>
        <dbReference type="ChEBI" id="CHEBI:30616"/>
        <dbReference type="ChEBI" id="CHEBI:43474"/>
        <dbReference type="ChEBI" id="CHEBI:456216"/>
        <dbReference type="EC" id="3.6.4.13"/>
    </reaction>
</comment>
<comment type="subunit">
    <text evidence="1">Heterodimer of a large and a small subunit.</text>
</comment>
<comment type="miscellaneous">
    <text>This protein is translated as a fusion protein by episodic readthrough of a termination codon. When readthrough of the amber terminator codon TAG occurs between the codons for Gln-1116 and Gln-1118, this results in the addition of the RdRp region to the replicase.</text>
</comment>
<comment type="similarity">
    <text evidence="5">Belongs to the ssRNA positive-strand viruses RNA-directed RNA polymerase family.</text>
</comment>
<evidence type="ECO:0000250" key="1"/>
<evidence type="ECO:0000255" key="2"/>
<evidence type="ECO:0000255" key="3">
    <source>
        <dbReference type="PROSITE-ProRule" id="PRU00539"/>
    </source>
</evidence>
<evidence type="ECO:0000255" key="4">
    <source>
        <dbReference type="PROSITE-ProRule" id="PRU01079"/>
    </source>
</evidence>
<evidence type="ECO:0000305" key="5"/>
<sequence>MAYTQTATTSALLDTVRGNNSLVNDLAKRRLYDTAVEEFNARDRRPKVNFSKVISEEQTLIATRAYPEFQITFYNTQNAVHSLAGGLRSLELEYLMMQIPYGSLTYDIGGNFASHLFKGRAYVHCCMPNLDVRDIMRHEGQKDSIELYLSRLERGGKTVPNFQKEAFDRYAEIPEDAVCHNTFQTCEHQPMQQSGRVYAIALHSIYDIPADEFGAALLRKNVHTCYAAFHFSENLLLEDSYVNLDEINACFSRDGDKLTFSFASESTLNYCHSYSNILKYVCKTYFPASNREVYMKEFLVTRVNTWFCKFSRIDTFLLYKGVAHKSVDSEQFYTAMEDAWHYKKTLAMCNSERILLEDSSSVNYWFPKMRDMVIVPLFDISLETSKRTRKEVLVSKDFVFTVLNHIRTYQAKALTYANVLSFVESIRSRVIINGVTARSEWDVDKSLLQSLSMTFYLHTKLAVLKDDLLISKFSLGSKTVCQHVWDEISLAFGNAFPSVKERLLNRKLIRVAGDALEIRVPDLYVTFHDRLVTEYKASVDMPALDIRKKMEETEVMYNALSELSVLRESDKFDVDVFSQMCQSLEVDPMTAAKVIVAVMSNESGLTLTFERPTEANVALALQDQEKASEGALVVTSREVEEPSMKGSMARGELQLAGLAGDHPESSYSRNEEIESLEQFHMATADSLIRKQMSSIVYTGPIKVQQMKNFIDSLVASLSAAVSNLVKILKDTAAIDLETRQKFGVLDVASRKWLIKPTAKSHAWGVVETHARKYHVALLEYDEQGVVTCDDWRRVAVSSESVVYSDMAKLRTLRRLLRNGEPHVSSAKVVLVDGVPGCGKTKEILSRVNFDEDLILVPGKQAAEMIRRRANSSGIIVATKDNVKTVDSFMMNFGKSTRCQFKRLFIDEGLMLHTGCVNFLVAMSLCEIAYVYGDTQQIPYINRVSGFPYPAHFAKLEVDEVETRRTTLRCPADVTHYLNRRYEGFVMSTSSVKKSVSQEMVGGAAVINPISKPLHGKILTFTQSDKEALLSRGYSDVHTVHEVQGETYSDVSLVRLTPTPVSIIAGDSPHVLVALSRHTCSLKYYTVVMDPLVSIIRDLEKLSSYLLDMYKVDAGTQXQLQIDSVFKGSNLFVAAPKTGDISDMQFYYDKCLPGNSTMMNNFDAVTMRLTDISLNVKDCILDMSKSVAAPKDQIKPLTPMVRTAAEMPRQTGLLENLVAMIKRNFNAPELSGIIDIENTASLVVDKFFDSYLLKEKRKPNKNVSLFSRESLNRWLEKQEQVTIGQLADFDFVDLPAVDQYRHMIKAQPKQKLDTSIQTEYPALQTIVYHSKKINAIFGPLFSELTRQLLDSVDSSRFLFFTRKTPAQIEDFFGDLDSHVPMDVLELDISKYDKSQNEFHCAVEYEIWRRLGFEDFLGEVWKQGHRKTTLKDYTAGIKTCIWYQRKSGDVTTFIGNTVIIAACLASMLPMEKIIKGAFCGDDSLLYFPKGCEFPDVQHSANLMWNFEAKLFKKQYGYFCGRYVIHHDRGCIVYYDPLKLISKLGAKHIKDWEHLEEFRRSLCDVAVSLNNCAYYTQLDDAVREVHKTAPPGSFVYKSLVKFLSDKVLFRSLFIDGSSC</sequence>
<feature type="chain" id="PRO_0000041168" description="Replicase large subunit">
    <location>
        <begin position="1"/>
        <end position="1616"/>
    </location>
</feature>
<feature type="chain" id="PRO_0000041169" description="Replicase small subunit">
    <location>
        <begin position="1"/>
        <end position="1116"/>
    </location>
</feature>
<feature type="domain" description="Alphavirus-like MT" evidence="4">
    <location>
        <begin position="72"/>
        <end position="281"/>
    </location>
</feature>
<feature type="domain" description="(+)RNA virus helicase ATP-binding">
    <location>
        <begin position="801"/>
        <end position="963"/>
    </location>
</feature>
<feature type="domain" description="(+)RNA virus helicase C-terminal">
    <location>
        <begin position="964"/>
        <end position="1116"/>
    </location>
</feature>
<feature type="domain" description="RdRp catalytic" evidence="3">
    <location>
        <begin position="1380"/>
        <end position="1493"/>
    </location>
</feature>
<feature type="region of interest" description="Methyltransferase" evidence="2">
    <location>
        <begin position="50"/>
        <end position="458"/>
    </location>
</feature>
<feature type="region of interest" description="Helicase" evidence="2">
    <location>
        <begin position="830"/>
        <end position="1085"/>
    </location>
</feature>
<feature type="binding site" evidence="2">
    <location>
        <begin position="833"/>
        <end position="840"/>
    </location>
    <ligand>
        <name>ATP</name>
        <dbReference type="ChEBI" id="CHEBI:30616"/>
    </ligand>
</feature>
<accession>O93058</accession>
<accession>Q88561</accession>
<dbReference type="EC" id="2.1.1.-"/>
<dbReference type="EC" id="2.7.7.-"/>
<dbReference type="EC" id="2.7.7.48"/>
<dbReference type="EC" id="3.6.4.13"/>
<dbReference type="EMBL" id="D78608">
    <property type="protein sequence ID" value="BAA11429.1"/>
    <property type="molecule type" value="Genomic_RNA"/>
</dbReference>
<dbReference type="EMBL" id="D78608">
    <property type="protein sequence ID" value="BAA11430.1"/>
    <property type="molecule type" value="Genomic_RNA"/>
</dbReference>
<dbReference type="Proteomes" id="UP000000280">
    <property type="component" value="Genome"/>
</dbReference>
<dbReference type="GO" id="GO:0005524">
    <property type="term" value="F:ATP binding"/>
    <property type="evidence" value="ECO:0007669"/>
    <property type="project" value="UniProtKB-KW"/>
</dbReference>
<dbReference type="GO" id="GO:0016887">
    <property type="term" value="F:ATP hydrolysis activity"/>
    <property type="evidence" value="ECO:0007669"/>
    <property type="project" value="RHEA"/>
</dbReference>
<dbReference type="GO" id="GO:0008174">
    <property type="term" value="F:mRNA methyltransferase activity"/>
    <property type="evidence" value="ECO:0007669"/>
    <property type="project" value="InterPro"/>
</dbReference>
<dbReference type="GO" id="GO:0003723">
    <property type="term" value="F:RNA binding"/>
    <property type="evidence" value="ECO:0007669"/>
    <property type="project" value="InterPro"/>
</dbReference>
<dbReference type="GO" id="GO:0003724">
    <property type="term" value="F:RNA helicase activity"/>
    <property type="evidence" value="ECO:0007669"/>
    <property type="project" value="UniProtKB-EC"/>
</dbReference>
<dbReference type="GO" id="GO:0003968">
    <property type="term" value="F:RNA-directed RNA polymerase activity"/>
    <property type="evidence" value="ECO:0007669"/>
    <property type="project" value="UniProtKB-KW"/>
</dbReference>
<dbReference type="GO" id="GO:0006351">
    <property type="term" value="P:DNA-templated transcription"/>
    <property type="evidence" value="ECO:0007669"/>
    <property type="project" value="InterPro"/>
</dbReference>
<dbReference type="GO" id="GO:0016556">
    <property type="term" value="P:mRNA modification"/>
    <property type="evidence" value="ECO:0007669"/>
    <property type="project" value="InterPro"/>
</dbReference>
<dbReference type="GO" id="GO:0006396">
    <property type="term" value="P:RNA processing"/>
    <property type="evidence" value="ECO:0007669"/>
    <property type="project" value="InterPro"/>
</dbReference>
<dbReference type="GO" id="GO:0052170">
    <property type="term" value="P:symbiont-mediated suppression of host innate immune response"/>
    <property type="evidence" value="ECO:0007669"/>
    <property type="project" value="UniProtKB-KW"/>
</dbReference>
<dbReference type="GO" id="GO:0039694">
    <property type="term" value="P:viral RNA genome replication"/>
    <property type="evidence" value="ECO:0007669"/>
    <property type="project" value="InterPro"/>
</dbReference>
<dbReference type="CDD" id="cd23251">
    <property type="entry name" value="Virgaviridae_RdRp"/>
    <property type="match status" value="1"/>
</dbReference>
<dbReference type="Gene3D" id="3.30.450.420">
    <property type="match status" value="1"/>
</dbReference>
<dbReference type="Gene3D" id="3.40.50.300">
    <property type="entry name" value="P-loop containing nucleotide triphosphate hydrolases"/>
    <property type="match status" value="2"/>
</dbReference>
<dbReference type="InterPro" id="IPR027351">
    <property type="entry name" value="(+)RNA_virus_helicase_core_dom"/>
</dbReference>
<dbReference type="InterPro" id="IPR002588">
    <property type="entry name" value="Alphavirus-like_MT_dom"/>
</dbReference>
<dbReference type="InterPro" id="IPR043502">
    <property type="entry name" value="DNA/RNA_pol_sf"/>
</dbReference>
<dbReference type="InterPro" id="IPR027417">
    <property type="entry name" value="P-loop_NTPase"/>
</dbReference>
<dbReference type="InterPro" id="IPR001788">
    <property type="entry name" value="RNA-dep_RNA_pol_alsuvir"/>
</dbReference>
<dbReference type="InterPro" id="IPR007094">
    <property type="entry name" value="RNA-dir_pol_PSvirus"/>
</dbReference>
<dbReference type="InterPro" id="IPR049329">
    <property type="entry name" value="ToMV_Hel_N"/>
</dbReference>
<dbReference type="InterPro" id="IPR047310">
    <property type="entry name" value="Virgaviridae_RdRp"/>
</dbReference>
<dbReference type="Pfam" id="PF00978">
    <property type="entry name" value="RdRP_2"/>
    <property type="match status" value="1"/>
</dbReference>
<dbReference type="Pfam" id="PF20896">
    <property type="entry name" value="ToMV_Hel_N"/>
    <property type="match status" value="1"/>
</dbReference>
<dbReference type="Pfam" id="PF01443">
    <property type="entry name" value="Viral_helicase1"/>
    <property type="match status" value="1"/>
</dbReference>
<dbReference type="Pfam" id="PF01660">
    <property type="entry name" value="Vmethyltransf"/>
    <property type="match status" value="1"/>
</dbReference>
<dbReference type="SUPFAM" id="SSF56672">
    <property type="entry name" value="DNA/RNA polymerases"/>
    <property type="match status" value="1"/>
</dbReference>
<dbReference type="SUPFAM" id="SSF52540">
    <property type="entry name" value="P-loop containing nucleoside triphosphate hydrolases"/>
    <property type="match status" value="1"/>
</dbReference>
<dbReference type="PROSITE" id="PS51743">
    <property type="entry name" value="ALPHAVIRUS_MT"/>
    <property type="match status" value="1"/>
</dbReference>
<dbReference type="PROSITE" id="PS51657">
    <property type="entry name" value="PSRV_HELICASE"/>
    <property type="match status" value="1"/>
</dbReference>
<dbReference type="PROSITE" id="PS50507">
    <property type="entry name" value="RDRP_SSRNA_POS"/>
    <property type="match status" value="1"/>
</dbReference>
<protein>
    <recommendedName>
        <fullName>Replicase large subunit</fullName>
        <ecNumber>2.1.1.-</ecNumber>
        <ecNumber>2.7.7.-</ecNumber>
        <ecNumber>2.7.7.48</ecNumber>
        <ecNumber>3.6.4.13</ecNumber>
    </recommendedName>
    <alternativeName>
        <fullName>183 kDa protein</fullName>
    </alternativeName>
    <alternativeName>
        <fullName>RNA-directed RNA polymerase</fullName>
    </alternativeName>
    <component>
        <recommendedName>
            <fullName>Replicase small subunit</fullName>
            <ecNumber>2.1.1.-</ecNumber>
            <ecNumber>2.7.7.-</ecNumber>
            <ecNumber>3.6.4.13</ecNumber>
        </recommendedName>
        <alternativeName>
            <fullName>126 kDa protein</fullName>
        </alternativeName>
        <alternativeName>
            <fullName>Methyltransferase/RNA helicase</fullName>
            <shortName>MT/HEL</shortName>
        </alternativeName>
    </component>
</protein>